<sequence length="914" mass="99166">MEAIDELSQLSDSMKQAASLLADEDPDETSSSKRPATFLNVVALGNVGAGKSAVLNSLIGHPVLPTGENGATRAPIIIELSRESSLSSKAIILQIDNKSQQVSASALRHSLQDRLSKGASGKNRDEINLKLRTSTAPPLKLVDLPGLDQRIVDESMIAEYAQHNDAILLVIVPASQASEISSSRALKIAKEYDPESTRTIGIIGKIDQAAENSKALAAVQALLSNQGPPKTTDIPWVAVIGQSVSIASAQSGSGENSLETAWRAESESLKSILTGAPQSKLGRIALVDTLASQIRSRMKLRLPSVLSGLQGKSQIVQDELARLGEQLVNSAEGTRAIALELCREFEDKFLLHLAGGEGSGWKVVASFEGNFPNRIKQLPLDRHFDLNNVKRVVLEADGYQPYLISPEKGLRSLIKIVLELAKDPARLCVDEVHRVLVDIVSASANATPGLGRYPPFKREVVAIASAALDGFKNEAKKMVVALVDMERAFVPPQHFIRLVQRRMERQRREEELKGRSSKKGQDAEQSLLSRATSPQPDGPTAGGSLKSMKDKPSPQDKETPEVSGLKTAGPEGEITAGYLMKKSAKTNGWSRRWFVLNEKTGKLGYTKKQEERNFRGTITLEECTIEEIPEDEVEKSKSSKDKKANGPDSKGPGLVFKITCKVPYKTVLKAHNALVLKAESVVDKNEWINKLQKVIQARGGQVGSVSMRQSLSEGSLDKMVRKPIDPEEELRWMSQEVRGYVEAVLNSLAANVPKAVVLCQVEKAKEDMLNQLYSSISAIGNERIESLIQEDQNVKRRRERYQKQSSLLSKLTRQLSIHDNRAAAASSYSDNSGTESSPRASGGSSGDDWMNAFNSAANGPSDSLSKYGSGGHSRRYSDPAQNGDAASPGSGSNRRTTPNRLPPAPPPTGSAYRY</sequence>
<name>DRP2A_ARATH</name>
<proteinExistence type="evidence at protein level"/>
<reference key="1">
    <citation type="journal article" date="2001" name="Plant Cell">
        <title>A new dynamin-like protein, ADL6, is involved in trafficking from the trans-Golgi network to the central vacuole in Arabidopsis.</title>
        <authorList>
            <person name="Jin J.B."/>
            <person name="Kim Y.A."/>
            <person name="Kim S.J."/>
            <person name="Lee S.H."/>
            <person name="Kim D.H."/>
            <person name="Cheong G.-W."/>
            <person name="Hwang I."/>
        </authorList>
    </citation>
    <scope>NUCLEOTIDE SEQUENCE [MRNA]</scope>
    <scope>FUNCTION</scope>
    <scope>SUBCELLULAR LOCATION</scope>
    <scope>MUTAGENESIS OF LYS-51</scope>
</reference>
<reference key="2">
    <citation type="journal article" date="2000" name="Nature">
        <title>Sequence and analysis of chromosome 1 of the plant Arabidopsis thaliana.</title>
        <authorList>
            <person name="Theologis A."/>
            <person name="Ecker J.R."/>
            <person name="Palm C.J."/>
            <person name="Federspiel N.A."/>
            <person name="Kaul S."/>
            <person name="White O."/>
            <person name="Alonso J."/>
            <person name="Altafi H."/>
            <person name="Araujo R."/>
            <person name="Bowman C.L."/>
            <person name="Brooks S.Y."/>
            <person name="Buehler E."/>
            <person name="Chan A."/>
            <person name="Chao Q."/>
            <person name="Chen H."/>
            <person name="Cheuk R.F."/>
            <person name="Chin C.W."/>
            <person name="Chung M.K."/>
            <person name="Conn L."/>
            <person name="Conway A.B."/>
            <person name="Conway A.R."/>
            <person name="Creasy T.H."/>
            <person name="Dewar K."/>
            <person name="Dunn P."/>
            <person name="Etgu P."/>
            <person name="Feldblyum T.V."/>
            <person name="Feng J.-D."/>
            <person name="Fong B."/>
            <person name="Fujii C.Y."/>
            <person name="Gill J.E."/>
            <person name="Goldsmith A.D."/>
            <person name="Haas B."/>
            <person name="Hansen N.F."/>
            <person name="Hughes B."/>
            <person name="Huizar L."/>
            <person name="Hunter J.L."/>
            <person name="Jenkins J."/>
            <person name="Johnson-Hopson C."/>
            <person name="Khan S."/>
            <person name="Khaykin E."/>
            <person name="Kim C.J."/>
            <person name="Koo H.L."/>
            <person name="Kremenetskaia I."/>
            <person name="Kurtz D.B."/>
            <person name="Kwan A."/>
            <person name="Lam B."/>
            <person name="Langin-Hooper S."/>
            <person name="Lee A."/>
            <person name="Lee J.M."/>
            <person name="Lenz C.A."/>
            <person name="Li J.H."/>
            <person name="Li Y.-P."/>
            <person name="Lin X."/>
            <person name="Liu S.X."/>
            <person name="Liu Z.A."/>
            <person name="Luros J.S."/>
            <person name="Maiti R."/>
            <person name="Marziali A."/>
            <person name="Militscher J."/>
            <person name="Miranda M."/>
            <person name="Nguyen M."/>
            <person name="Nierman W.C."/>
            <person name="Osborne B.I."/>
            <person name="Pai G."/>
            <person name="Peterson J."/>
            <person name="Pham P.K."/>
            <person name="Rizzo M."/>
            <person name="Rooney T."/>
            <person name="Rowley D."/>
            <person name="Sakano H."/>
            <person name="Salzberg S.L."/>
            <person name="Schwartz J.R."/>
            <person name="Shinn P."/>
            <person name="Southwick A.M."/>
            <person name="Sun H."/>
            <person name="Tallon L.J."/>
            <person name="Tambunga G."/>
            <person name="Toriumi M.J."/>
            <person name="Town C.D."/>
            <person name="Utterback T."/>
            <person name="Van Aken S."/>
            <person name="Vaysberg M."/>
            <person name="Vysotskaia V.S."/>
            <person name="Walker M."/>
            <person name="Wu D."/>
            <person name="Yu G."/>
            <person name="Fraser C.M."/>
            <person name="Venter J.C."/>
            <person name="Davis R.W."/>
        </authorList>
    </citation>
    <scope>NUCLEOTIDE SEQUENCE [LARGE SCALE GENOMIC DNA]</scope>
    <source>
        <strain>cv. Columbia</strain>
    </source>
</reference>
<reference key="3">
    <citation type="journal article" date="2017" name="Plant J.">
        <title>Araport11: a complete reannotation of the Arabidopsis thaliana reference genome.</title>
        <authorList>
            <person name="Cheng C.Y."/>
            <person name="Krishnakumar V."/>
            <person name="Chan A.P."/>
            <person name="Thibaud-Nissen F."/>
            <person name="Schobel S."/>
            <person name="Town C.D."/>
        </authorList>
    </citation>
    <scope>GENOME REANNOTATION</scope>
    <source>
        <strain>cv. Columbia</strain>
    </source>
</reference>
<reference key="4">
    <citation type="submission" date="2006-07" db="EMBL/GenBank/DDBJ databases">
        <title>Large-scale analysis of RIKEN Arabidopsis full-length (RAFL) cDNAs.</title>
        <authorList>
            <person name="Totoki Y."/>
            <person name="Seki M."/>
            <person name="Ishida J."/>
            <person name="Nakajima M."/>
            <person name="Enju A."/>
            <person name="Kamiya A."/>
            <person name="Narusaka M."/>
            <person name="Shin-i T."/>
            <person name="Nakagawa M."/>
            <person name="Sakamoto N."/>
            <person name="Oishi K."/>
            <person name="Kohara Y."/>
            <person name="Kobayashi M."/>
            <person name="Toyoda A."/>
            <person name="Sakaki Y."/>
            <person name="Sakurai T."/>
            <person name="Iida K."/>
            <person name="Akiyama K."/>
            <person name="Satou M."/>
            <person name="Toyoda T."/>
            <person name="Konagaya A."/>
            <person name="Carninci P."/>
            <person name="Kawai J."/>
            <person name="Hayashizaki Y."/>
            <person name="Shinozaki K."/>
        </authorList>
    </citation>
    <scope>NUCLEOTIDE SEQUENCE [LARGE SCALE MRNA]</scope>
    <source>
        <strain>cv. Columbia</strain>
    </source>
</reference>
<reference key="5">
    <citation type="journal article" date="2002" name="J. Biol. Chem.">
        <title>The intermolecular interaction between the PH domain and the C-terminal domain of Arabidopsis dynamin-like 6 determines lipid binding specificity.</title>
        <authorList>
            <person name="Lee S.H."/>
            <person name="Jin J.B."/>
            <person name="Song J."/>
            <person name="Min M.K."/>
            <person name="Park D.S."/>
            <person name="Kim Y.-W."/>
            <person name="Hwang I."/>
        </authorList>
    </citation>
    <scope>FUNCTION</scope>
    <scope>LIPID-BINDING</scope>
</reference>
<reference key="6">
    <citation type="journal article" date="2002" name="Plant J.">
        <title>Regulation of ADL6 activity by its associated molecular network.</title>
        <authorList>
            <person name="Lam B.C.-H."/>
            <person name="Sage T.L."/>
            <person name="Bianchi F."/>
            <person name="Blumwald E."/>
        </authorList>
    </citation>
    <scope>FUNCTION</scope>
    <scope>INTERACTION WITH SH3P3 AND GAMMA-ADR</scope>
    <scope>SUBCELLULAR LOCATION</scope>
    <scope>ACTIVITY REGULATION</scope>
    <scope>DOMAIN</scope>
</reference>
<reference key="7">
    <citation type="journal article" date="2003" name="Plant Mol. Biol.">
        <title>A unified nomenclature for Arabidopsis dynamin-related large GTPases based on homology and possible functions.</title>
        <authorList>
            <person name="Hong Z."/>
            <person name="Bednarek S.Y."/>
            <person name="Blumwald E."/>
            <person name="Hwang I."/>
            <person name="Jurgens G."/>
            <person name="Menzel D."/>
            <person name="Osteryoung K.W."/>
            <person name="Raikhel N.V."/>
            <person name="Shinozaki K."/>
            <person name="Tsutsumi N."/>
            <person name="Verma D.P.S."/>
        </authorList>
    </citation>
    <scope>GENE FAMILY</scope>
    <scope>NOMENCLATURE</scope>
</reference>
<reference key="8">
    <citation type="journal article" date="2003" name="Plant Mol. Biol.">
        <title>Phragmoplastin dynamics: multiple forms, microtubule association and their roles in cell plate formation in plants.</title>
        <authorList>
            <person name="Hong Z."/>
            <person name="Geisler-Lee C.J."/>
            <person name="Zhang Z."/>
            <person name="Verma D.P.S."/>
        </authorList>
    </citation>
    <scope>SUBUNIT</scope>
    <scope>SUBCELLULAR LOCATION</scope>
</reference>
<reference key="9">
    <citation type="journal article" date="2009" name="Plant Physiol.">
        <title>Large-scale Arabidopsis phosphoproteome profiling reveals novel chloroplast kinase substrates and phosphorylation networks.</title>
        <authorList>
            <person name="Reiland S."/>
            <person name="Messerli G."/>
            <person name="Baerenfaller K."/>
            <person name="Gerrits B."/>
            <person name="Endler A."/>
            <person name="Grossmann J."/>
            <person name="Gruissem W."/>
            <person name="Baginsky S."/>
        </authorList>
    </citation>
    <scope>IDENTIFICATION BY MASS SPECTROMETRY [LARGE SCALE ANALYSIS]</scope>
</reference>
<reference key="10">
    <citation type="journal article" date="2012" name="Mol. Cell. Proteomics">
        <title>Comparative large-scale characterisation of plant vs. mammal proteins reveals similar and idiosyncratic N-alpha acetylation features.</title>
        <authorList>
            <person name="Bienvenut W.V."/>
            <person name="Sumpton D."/>
            <person name="Martinez A."/>
            <person name="Lilla S."/>
            <person name="Espagne C."/>
            <person name="Meinnel T."/>
            <person name="Giglione C."/>
        </authorList>
    </citation>
    <scope>ACETYLATION [LARGE SCALE ANALYSIS] AT MET-1</scope>
    <scope>IDENTIFICATION BY MASS SPECTROMETRY [LARGE SCALE ANALYSIS]</scope>
</reference>
<evidence type="ECO:0000250" key="1"/>
<evidence type="ECO:0000255" key="2"/>
<evidence type="ECO:0000255" key="3">
    <source>
        <dbReference type="PROSITE-ProRule" id="PRU00145"/>
    </source>
</evidence>
<evidence type="ECO:0000255" key="4">
    <source>
        <dbReference type="PROSITE-ProRule" id="PRU00720"/>
    </source>
</evidence>
<evidence type="ECO:0000255" key="5">
    <source>
        <dbReference type="PROSITE-ProRule" id="PRU01055"/>
    </source>
</evidence>
<evidence type="ECO:0000256" key="6">
    <source>
        <dbReference type="SAM" id="MobiDB-lite"/>
    </source>
</evidence>
<evidence type="ECO:0000269" key="7">
    <source>
    </source>
</evidence>
<evidence type="ECO:0000269" key="8">
    <source>
    </source>
</evidence>
<evidence type="ECO:0000269" key="9">
    <source>
    </source>
</evidence>
<evidence type="ECO:0000269" key="10">
    <source>
    </source>
</evidence>
<evidence type="ECO:0000305" key="11"/>
<evidence type="ECO:0007744" key="12">
    <source>
    </source>
</evidence>
<keyword id="KW-0007">Acetylation</keyword>
<keyword id="KW-0175">Coiled coil</keyword>
<keyword id="KW-0963">Cytoplasm</keyword>
<keyword id="KW-0968">Cytoplasmic vesicle</keyword>
<keyword id="KW-0206">Cytoskeleton</keyword>
<keyword id="KW-0333">Golgi apparatus</keyword>
<keyword id="KW-0342">GTP-binding</keyword>
<keyword id="KW-0378">Hydrolase</keyword>
<keyword id="KW-0446">Lipid-binding</keyword>
<keyword id="KW-0472">Membrane</keyword>
<keyword id="KW-0493">Microtubule</keyword>
<keyword id="KW-0505">Motor protein</keyword>
<keyword id="KW-0547">Nucleotide-binding</keyword>
<keyword id="KW-1185">Reference proteome</keyword>
<dbReference type="EC" id="3.6.5.5"/>
<dbReference type="EMBL" id="AF180732">
    <property type="protein sequence ID" value="AAF22291.1"/>
    <property type="molecule type" value="mRNA"/>
</dbReference>
<dbReference type="EMBL" id="AC005489">
    <property type="protein sequence ID" value="AAD32879.1"/>
    <property type="status" value="ALT_SEQ"/>
    <property type="molecule type" value="Genomic_DNA"/>
</dbReference>
<dbReference type="EMBL" id="CP002684">
    <property type="protein sequence ID" value="AEE28562.1"/>
    <property type="molecule type" value="Genomic_DNA"/>
</dbReference>
<dbReference type="EMBL" id="AK221193">
    <property type="protein sequence ID" value="BAD95292.1"/>
    <property type="molecule type" value="mRNA"/>
</dbReference>
<dbReference type="EMBL" id="AK228995">
    <property type="protein sequence ID" value="BAF00882.1"/>
    <property type="molecule type" value="mRNA"/>
</dbReference>
<dbReference type="PIR" id="B86237">
    <property type="entry name" value="B86237"/>
</dbReference>
<dbReference type="RefSeq" id="NP_172500.1">
    <property type="nucleotide sequence ID" value="NM_100903.4"/>
</dbReference>
<dbReference type="SMR" id="Q9SE83"/>
<dbReference type="BioGRID" id="22808">
    <property type="interactions" value="15"/>
</dbReference>
<dbReference type="FunCoup" id="Q9SE83">
    <property type="interactions" value="3087"/>
</dbReference>
<dbReference type="IntAct" id="Q9SE83">
    <property type="interactions" value="2"/>
</dbReference>
<dbReference type="STRING" id="3702.Q9SE83"/>
<dbReference type="GlyGen" id="Q9SE83">
    <property type="glycosylation" value="2 sites"/>
</dbReference>
<dbReference type="iPTMnet" id="Q9SE83"/>
<dbReference type="PaxDb" id="3702-AT1G10290.1"/>
<dbReference type="ProteomicsDB" id="224364"/>
<dbReference type="EnsemblPlants" id="AT1G10290.1">
    <property type="protein sequence ID" value="AT1G10290.1"/>
    <property type="gene ID" value="AT1G10290"/>
</dbReference>
<dbReference type="GeneID" id="837568"/>
<dbReference type="Gramene" id="AT1G10290.1">
    <property type="protein sequence ID" value="AT1G10290.1"/>
    <property type="gene ID" value="AT1G10290"/>
</dbReference>
<dbReference type="KEGG" id="ath:AT1G10290"/>
<dbReference type="Araport" id="AT1G10290"/>
<dbReference type="TAIR" id="AT1G10290">
    <property type="gene designation" value="ADL6"/>
</dbReference>
<dbReference type="eggNOG" id="KOG0446">
    <property type="taxonomic scope" value="Eukaryota"/>
</dbReference>
<dbReference type="HOGENOM" id="CLU_016157_1_0_1"/>
<dbReference type="InParanoid" id="Q9SE83"/>
<dbReference type="OMA" id="KNEARIM"/>
<dbReference type="PhylomeDB" id="Q9SE83"/>
<dbReference type="BRENDA" id="3.6.5.5">
    <property type="organism ID" value="399"/>
</dbReference>
<dbReference type="CD-CODE" id="4299E36E">
    <property type="entry name" value="Nucleolus"/>
</dbReference>
<dbReference type="PRO" id="PR:Q9SE83"/>
<dbReference type="Proteomes" id="UP000006548">
    <property type="component" value="Chromosome 1"/>
</dbReference>
<dbReference type="ExpressionAtlas" id="Q9SE83">
    <property type="expression patterns" value="baseline and differential"/>
</dbReference>
<dbReference type="GO" id="GO:0030136">
    <property type="term" value="C:clathrin-coated vesicle"/>
    <property type="evidence" value="ECO:0007669"/>
    <property type="project" value="UniProtKB-SubCell"/>
</dbReference>
<dbReference type="GO" id="GO:0005829">
    <property type="term" value="C:cytosol"/>
    <property type="evidence" value="ECO:0007669"/>
    <property type="project" value="UniProtKB-SubCell"/>
</dbReference>
<dbReference type="GO" id="GO:0005576">
    <property type="term" value="C:extracellular region"/>
    <property type="evidence" value="ECO:0007005"/>
    <property type="project" value="TAIR"/>
</dbReference>
<dbReference type="GO" id="GO:0005794">
    <property type="term" value="C:Golgi apparatus"/>
    <property type="evidence" value="ECO:0000314"/>
    <property type="project" value="TAIR"/>
</dbReference>
<dbReference type="GO" id="GO:0000139">
    <property type="term" value="C:Golgi membrane"/>
    <property type="evidence" value="ECO:0007669"/>
    <property type="project" value="UniProtKB-SubCell"/>
</dbReference>
<dbReference type="GO" id="GO:0005874">
    <property type="term" value="C:microtubule"/>
    <property type="evidence" value="ECO:0007669"/>
    <property type="project" value="UniProtKB-KW"/>
</dbReference>
<dbReference type="GO" id="GO:0009524">
    <property type="term" value="C:phragmoplast"/>
    <property type="evidence" value="ECO:0007669"/>
    <property type="project" value="UniProtKB-SubCell"/>
</dbReference>
<dbReference type="GO" id="GO:0000325">
    <property type="term" value="C:plant-type vacuole"/>
    <property type="evidence" value="ECO:0007005"/>
    <property type="project" value="TAIR"/>
</dbReference>
<dbReference type="GO" id="GO:0005886">
    <property type="term" value="C:plasma membrane"/>
    <property type="evidence" value="ECO:0007005"/>
    <property type="project" value="TAIR"/>
</dbReference>
<dbReference type="GO" id="GO:0009506">
    <property type="term" value="C:plasmodesma"/>
    <property type="evidence" value="ECO:0007005"/>
    <property type="project" value="TAIR"/>
</dbReference>
<dbReference type="GO" id="GO:0005525">
    <property type="term" value="F:GTP binding"/>
    <property type="evidence" value="ECO:0007669"/>
    <property type="project" value="UniProtKB-KW"/>
</dbReference>
<dbReference type="GO" id="GO:0003924">
    <property type="term" value="F:GTPase activity"/>
    <property type="evidence" value="ECO:0000250"/>
    <property type="project" value="TAIR"/>
</dbReference>
<dbReference type="GO" id="GO:0008289">
    <property type="term" value="F:lipid binding"/>
    <property type="evidence" value="ECO:0007669"/>
    <property type="project" value="UniProtKB-KW"/>
</dbReference>
<dbReference type="GO" id="GO:0006896">
    <property type="term" value="P:Golgi to vacuole transport"/>
    <property type="evidence" value="ECO:0000315"/>
    <property type="project" value="TAIR"/>
</dbReference>
<dbReference type="CDD" id="cd08771">
    <property type="entry name" value="DLP_1"/>
    <property type="match status" value="1"/>
</dbReference>
<dbReference type="FunFam" id="1.20.120.1240:FF:000011">
    <property type="entry name" value="Dynamin-2A"/>
    <property type="match status" value="1"/>
</dbReference>
<dbReference type="FunFam" id="1.20.120.1240:FF:000017">
    <property type="entry name" value="Dynamin-2A"/>
    <property type="match status" value="1"/>
</dbReference>
<dbReference type="FunFam" id="2.30.29.30:FF:000212">
    <property type="entry name" value="Dynamin-2A"/>
    <property type="match status" value="1"/>
</dbReference>
<dbReference type="FunFam" id="3.40.50.300:FF:000722">
    <property type="entry name" value="Dynamin-2B isoform A"/>
    <property type="match status" value="1"/>
</dbReference>
<dbReference type="Gene3D" id="1.20.120.1240">
    <property type="entry name" value="Dynamin, middle domain"/>
    <property type="match status" value="1"/>
</dbReference>
<dbReference type="Gene3D" id="3.40.50.300">
    <property type="entry name" value="P-loop containing nucleotide triphosphate hydrolases"/>
    <property type="match status" value="1"/>
</dbReference>
<dbReference type="Gene3D" id="2.30.29.30">
    <property type="entry name" value="Pleckstrin-homology domain (PH domain)/Phosphotyrosine-binding domain (PTB)"/>
    <property type="match status" value="1"/>
</dbReference>
<dbReference type="InterPro" id="IPR022812">
    <property type="entry name" value="Dynamin"/>
</dbReference>
<dbReference type="InterPro" id="IPR001401">
    <property type="entry name" value="Dynamin_GTPase"/>
</dbReference>
<dbReference type="InterPro" id="IPR019762">
    <property type="entry name" value="Dynamin_GTPase_CS"/>
</dbReference>
<dbReference type="InterPro" id="IPR045063">
    <property type="entry name" value="Dynamin_N"/>
</dbReference>
<dbReference type="InterPro" id="IPR000375">
    <property type="entry name" value="Dynamin_stalk"/>
</dbReference>
<dbReference type="InterPro" id="IPR030381">
    <property type="entry name" value="G_DYNAMIN_dom"/>
</dbReference>
<dbReference type="InterPro" id="IPR003130">
    <property type="entry name" value="GED"/>
</dbReference>
<dbReference type="InterPro" id="IPR020850">
    <property type="entry name" value="GED_dom"/>
</dbReference>
<dbReference type="InterPro" id="IPR027417">
    <property type="entry name" value="P-loop_NTPase"/>
</dbReference>
<dbReference type="InterPro" id="IPR011993">
    <property type="entry name" value="PH-like_dom_sf"/>
</dbReference>
<dbReference type="InterPro" id="IPR001849">
    <property type="entry name" value="PH_domain"/>
</dbReference>
<dbReference type="PANTHER" id="PTHR11566">
    <property type="entry name" value="DYNAMIN"/>
    <property type="match status" value="1"/>
</dbReference>
<dbReference type="PANTHER" id="PTHR11566:SF206">
    <property type="entry name" value="DYNAMIN-2A"/>
    <property type="match status" value="1"/>
</dbReference>
<dbReference type="Pfam" id="PF01031">
    <property type="entry name" value="Dynamin_M"/>
    <property type="match status" value="1"/>
</dbReference>
<dbReference type="Pfam" id="PF00350">
    <property type="entry name" value="Dynamin_N"/>
    <property type="match status" value="1"/>
</dbReference>
<dbReference type="Pfam" id="PF02212">
    <property type="entry name" value="GED"/>
    <property type="match status" value="1"/>
</dbReference>
<dbReference type="Pfam" id="PF00169">
    <property type="entry name" value="PH"/>
    <property type="match status" value="1"/>
</dbReference>
<dbReference type="PRINTS" id="PR00195">
    <property type="entry name" value="DYNAMIN"/>
</dbReference>
<dbReference type="SMART" id="SM00053">
    <property type="entry name" value="DYNc"/>
    <property type="match status" value="1"/>
</dbReference>
<dbReference type="SMART" id="SM00233">
    <property type="entry name" value="PH"/>
    <property type="match status" value="1"/>
</dbReference>
<dbReference type="SUPFAM" id="SSF52540">
    <property type="entry name" value="P-loop containing nucleoside triphosphate hydrolases"/>
    <property type="match status" value="1"/>
</dbReference>
<dbReference type="SUPFAM" id="SSF50729">
    <property type="entry name" value="PH domain-like"/>
    <property type="match status" value="1"/>
</dbReference>
<dbReference type="PROSITE" id="PS00410">
    <property type="entry name" value="G_DYNAMIN_1"/>
    <property type="match status" value="1"/>
</dbReference>
<dbReference type="PROSITE" id="PS51718">
    <property type="entry name" value="G_DYNAMIN_2"/>
    <property type="match status" value="1"/>
</dbReference>
<dbReference type="PROSITE" id="PS51388">
    <property type="entry name" value="GED"/>
    <property type="match status" value="1"/>
</dbReference>
<dbReference type="PROSITE" id="PS50003">
    <property type="entry name" value="PH_DOMAIN"/>
    <property type="match status" value="1"/>
</dbReference>
<organism>
    <name type="scientific">Arabidopsis thaliana</name>
    <name type="common">Mouse-ear cress</name>
    <dbReference type="NCBI Taxonomy" id="3702"/>
    <lineage>
        <taxon>Eukaryota</taxon>
        <taxon>Viridiplantae</taxon>
        <taxon>Streptophyta</taxon>
        <taxon>Embryophyta</taxon>
        <taxon>Tracheophyta</taxon>
        <taxon>Spermatophyta</taxon>
        <taxon>Magnoliopsida</taxon>
        <taxon>eudicotyledons</taxon>
        <taxon>Gunneridae</taxon>
        <taxon>Pentapetalae</taxon>
        <taxon>rosids</taxon>
        <taxon>malvids</taxon>
        <taxon>Brassicales</taxon>
        <taxon>Brassicaceae</taxon>
        <taxon>Camelineae</taxon>
        <taxon>Arabidopsis</taxon>
    </lineage>
</organism>
<gene>
    <name type="primary">DRP2A</name>
    <name type="synonym">ADL6</name>
    <name type="ordered locus">At1g10290</name>
    <name type="ORF">F14N23.17</name>
</gene>
<feature type="chain" id="PRO_0000206582" description="Dynamin-2A">
    <location>
        <begin position="1"/>
        <end position="914"/>
    </location>
</feature>
<feature type="domain" description="Dynamin-type G" evidence="5">
    <location>
        <begin position="35"/>
        <end position="303"/>
    </location>
</feature>
<feature type="domain" description="PH" evidence="3">
    <location>
        <begin position="572"/>
        <end position="696"/>
    </location>
</feature>
<feature type="domain" description="GED" evidence="4">
    <location>
        <begin position="730"/>
        <end position="823"/>
    </location>
</feature>
<feature type="region of interest" description="G1 motif" evidence="5">
    <location>
        <begin position="45"/>
        <end position="52"/>
    </location>
</feature>
<feature type="region of interest" description="G2 motif" evidence="5">
    <location>
        <begin position="71"/>
        <end position="73"/>
    </location>
</feature>
<feature type="region of interest" description="G3 motif" evidence="5">
    <location>
        <begin position="143"/>
        <end position="146"/>
    </location>
</feature>
<feature type="region of interest" description="G4 motif" evidence="5">
    <location>
        <begin position="204"/>
        <end position="207"/>
    </location>
</feature>
<feature type="region of interest" description="G5 motif" evidence="5">
    <location>
        <begin position="238"/>
        <end position="241"/>
    </location>
</feature>
<feature type="region of interest" description="Disordered" evidence="6">
    <location>
        <begin position="507"/>
        <end position="570"/>
    </location>
</feature>
<feature type="region of interest" description="Disordered" evidence="6">
    <location>
        <begin position="629"/>
        <end position="648"/>
    </location>
</feature>
<feature type="region of interest" description="Disordered" evidence="6">
    <location>
        <begin position="821"/>
        <end position="914"/>
    </location>
</feature>
<feature type="coiled-coil region" evidence="2">
    <location>
        <begin position="781"/>
        <end position="805"/>
    </location>
</feature>
<feature type="compositionally biased region" description="Basic and acidic residues" evidence="6">
    <location>
        <begin position="507"/>
        <end position="522"/>
    </location>
</feature>
<feature type="compositionally biased region" description="Polar residues" evidence="6">
    <location>
        <begin position="523"/>
        <end position="535"/>
    </location>
</feature>
<feature type="compositionally biased region" description="Basic and acidic residues" evidence="6">
    <location>
        <begin position="547"/>
        <end position="560"/>
    </location>
</feature>
<feature type="compositionally biased region" description="Basic and acidic residues" evidence="6">
    <location>
        <begin position="634"/>
        <end position="645"/>
    </location>
</feature>
<feature type="compositionally biased region" description="Polar residues" evidence="6">
    <location>
        <begin position="826"/>
        <end position="839"/>
    </location>
</feature>
<feature type="compositionally biased region" description="Polar residues" evidence="6">
    <location>
        <begin position="852"/>
        <end position="866"/>
    </location>
</feature>
<feature type="binding site" evidence="2">
    <location>
        <begin position="45"/>
        <end position="52"/>
    </location>
    <ligand>
        <name>GTP</name>
        <dbReference type="ChEBI" id="CHEBI:37565"/>
    </ligand>
</feature>
<feature type="binding site" evidence="1">
    <location>
        <begin position="143"/>
        <end position="147"/>
    </location>
    <ligand>
        <name>GTP</name>
        <dbReference type="ChEBI" id="CHEBI:37565"/>
    </ligand>
</feature>
<feature type="binding site" evidence="1">
    <location>
        <begin position="204"/>
        <end position="207"/>
    </location>
    <ligand>
        <name>GTP</name>
        <dbReference type="ChEBI" id="CHEBI:37565"/>
    </ligand>
</feature>
<feature type="modified residue" description="N-acetylmethionine" evidence="12">
    <location>
        <position position="1"/>
    </location>
</feature>
<feature type="mutagenesis site" description="Affects the trafficking between the Golgi apparatus and the vacuole." evidence="7">
    <original>K</original>
    <variation>E</variation>
    <location>
        <position position="51"/>
    </location>
</feature>
<feature type="sequence conflict" description="In Ref. 4; BAD95292." evidence="11" ref="4">
    <original>T</original>
    <variation>S</variation>
    <location>
        <position position="617"/>
    </location>
</feature>
<feature type="sequence conflict" description="In Ref. 4; BAF00882." evidence="11" ref="4">
    <original>E</original>
    <variation>V</variation>
    <location>
        <position position="622"/>
    </location>
</feature>
<feature type="sequence conflict" description="In Ref. 4; BAD95292." evidence="11" ref="4">
    <original>V</original>
    <variation>G</variation>
    <location>
        <position position="633"/>
    </location>
</feature>
<feature type="sequence conflict" description="In Ref. 1; AAF22291." evidence="11" ref="1">
    <original>A</original>
    <variation>T</variation>
    <location>
        <position position="840"/>
    </location>
</feature>
<protein>
    <recommendedName>
        <fullName>Dynamin-2A</fullName>
        <ecNumber>3.6.5.5</ecNumber>
    </recommendedName>
    <alternativeName>
        <fullName>Dynamin-like protein 6</fullName>
    </alternativeName>
    <alternativeName>
        <fullName>Dynamin-related protein 2A</fullName>
    </alternativeName>
</protein>
<comment type="function">
    <text evidence="7 8 9">Microtubule-associated force-producing protein involved in clathrin-mediated vesicle trafficking from the trans-Golgi network to the central vacuole. Able to bind and hydrolyze GTP. Binds specifically to phosphatidylinositol 3-phosphate (PtdIns3P).</text>
</comment>
<comment type="catalytic activity">
    <reaction>
        <text>GTP + H2O = GDP + phosphate + H(+)</text>
        <dbReference type="Rhea" id="RHEA:19669"/>
        <dbReference type="ChEBI" id="CHEBI:15377"/>
        <dbReference type="ChEBI" id="CHEBI:15378"/>
        <dbReference type="ChEBI" id="CHEBI:37565"/>
        <dbReference type="ChEBI" id="CHEBI:43474"/>
        <dbReference type="ChEBI" id="CHEBI:58189"/>
        <dbReference type="EC" id="3.6.5.5"/>
    </reaction>
</comment>
<comment type="activity regulation">
    <text evidence="9">Increased GTPase activity in the presence of phosphatidic acid.</text>
</comment>
<comment type="subunit">
    <text evidence="9 10">Binds PtdIns3P (PubMed:12207647). Interacts with SH3P3 (via SH3 domain) and (via C-terminus) with GAMMA-ADR (PubMed:12207647). May homooligomerize or heterooligomerize (PubMed:14750520).</text>
</comment>
<comment type="subcellular location">
    <subcellularLocation>
        <location>Cytoplasm</location>
        <location>Cytosol</location>
    </subcellularLocation>
    <subcellularLocation>
        <location>Golgi apparatus membrane</location>
        <topology>Peripheral membrane protein</topology>
    </subcellularLocation>
    <subcellularLocation>
        <location>Cytoplasm</location>
        <location>Cytoskeleton</location>
        <location>Phragmoplast</location>
    </subcellularLocation>
    <subcellularLocation>
        <location evidence="9">Cytoplasmic vesicle</location>
        <location evidence="9">Clathrin-coated vesicle</location>
    </subcellularLocation>
    <text>Localized in the forming cell plate during cytokinesis.</text>
</comment>
<comment type="domain">
    <text evidence="9">The PH domain binds phospholipids. The PRD1 motif (721-728) is necessary for the interaction with SH3P3.</text>
</comment>
<comment type="similarity">
    <text evidence="5">Belongs to the TRAFAC class dynamin-like GTPase superfamily. Dynamin/Fzo/YdjA family.</text>
</comment>
<comment type="sequence caution" evidence="11">
    <conflict type="erroneous gene model prediction">
        <sequence resource="EMBL-CDS" id="AAD32879"/>
    </conflict>
</comment>
<accession>Q9SE83</accession>
<accession>Q0WPR7</accession>
<accession>Q56YX7</accession>
<accession>Q9SY71</accession>